<protein>
    <recommendedName>
        <fullName evidence="3">Small ribosomal subunit protein bS18</fullName>
    </recommendedName>
    <alternativeName>
        <fullName>30S ribosomal protein S18</fullName>
    </alternativeName>
</protein>
<evidence type="ECO:0000250" key="1"/>
<evidence type="ECO:0000255" key="2">
    <source>
        <dbReference type="HAMAP-Rule" id="MF_00270"/>
    </source>
</evidence>
<evidence type="ECO:0000305" key="3"/>
<reference key="1">
    <citation type="submission" date="2003-06" db="EMBL/GenBank/DDBJ databases">
        <title>The complete genome sequence of Haemophilus ducreyi.</title>
        <authorList>
            <person name="Munson R.S. Jr."/>
            <person name="Ray W.C."/>
            <person name="Mahairas G."/>
            <person name="Sabo P."/>
            <person name="Mungur R."/>
            <person name="Johnson L."/>
            <person name="Nguyen D."/>
            <person name="Wang J."/>
            <person name="Forst C."/>
            <person name="Hood L."/>
        </authorList>
    </citation>
    <scope>NUCLEOTIDE SEQUENCE [LARGE SCALE GENOMIC DNA]</scope>
    <source>
        <strain>35000HP / ATCC 700724</strain>
    </source>
</reference>
<sequence length="75" mass="8942">MARYFRRRKFCRFTAENVVEIDYKDIATLKNYISESGKIVPSRITGTRAKYQRQLARAIKRARYLALLPYTDNHQ</sequence>
<proteinExistence type="inferred from homology"/>
<gene>
    <name type="primary">rpsR</name>
    <name type="synonym">rps18</name>
    <name type="ordered locus">HD_1047</name>
</gene>
<accession>P66458</accession>
<accession>P44384</accession>
<name>RS18_HAEDU</name>
<comment type="function">
    <text evidence="2">Binds as a heterodimer with protein bS6 to the central domain of the 16S rRNA, where it helps stabilize the platform of the 30S subunit.</text>
</comment>
<comment type="subunit">
    <text evidence="2">Part of the 30S ribosomal subunit. Forms a tight heterodimer with protein bS6.</text>
</comment>
<comment type="similarity">
    <text evidence="3">Belongs to the bacterial ribosomal protein bS18 family.</text>
</comment>
<organism>
    <name type="scientific">Haemophilus ducreyi (strain 35000HP / ATCC 700724)</name>
    <dbReference type="NCBI Taxonomy" id="233412"/>
    <lineage>
        <taxon>Bacteria</taxon>
        <taxon>Pseudomonadati</taxon>
        <taxon>Pseudomonadota</taxon>
        <taxon>Gammaproteobacteria</taxon>
        <taxon>Pasteurellales</taxon>
        <taxon>Pasteurellaceae</taxon>
        <taxon>Haemophilus</taxon>
    </lineage>
</organism>
<dbReference type="EMBL" id="AE017143">
    <property type="protein sequence ID" value="AAP95921.1"/>
    <property type="molecule type" value="Genomic_DNA"/>
</dbReference>
<dbReference type="RefSeq" id="WP_005598105.1">
    <property type="nucleotide sequence ID" value="NC_002940.2"/>
</dbReference>
<dbReference type="SMR" id="P66458"/>
<dbReference type="STRING" id="233412.HD_1047"/>
<dbReference type="GeneID" id="93219554"/>
<dbReference type="KEGG" id="hdu:HD_1047"/>
<dbReference type="eggNOG" id="COG0238">
    <property type="taxonomic scope" value="Bacteria"/>
</dbReference>
<dbReference type="HOGENOM" id="CLU_148710_2_2_6"/>
<dbReference type="OrthoDB" id="9812008at2"/>
<dbReference type="Proteomes" id="UP000001022">
    <property type="component" value="Chromosome"/>
</dbReference>
<dbReference type="GO" id="GO:0022627">
    <property type="term" value="C:cytosolic small ribosomal subunit"/>
    <property type="evidence" value="ECO:0007669"/>
    <property type="project" value="TreeGrafter"/>
</dbReference>
<dbReference type="GO" id="GO:0070181">
    <property type="term" value="F:small ribosomal subunit rRNA binding"/>
    <property type="evidence" value="ECO:0007669"/>
    <property type="project" value="TreeGrafter"/>
</dbReference>
<dbReference type="GO" id="GO:0003735">
    <property type="term" value="F:structural constituent of ribosome"/>
    <property type="evidence" value="ECO:0007669"/>
    <property type="project" value="InterPro"/>
</dbReference>
<dbReference type="GO" id="GO:0006412">
    <property type="term" value="P:translation"/>
    <property type="evidence" value="ECO:0007669"/>
    <property type="project" value="UniProtKB-UniRule"/>
</dbReference>
<dbReference type="FunFam" id="4.10.640.10:FF:000001">
    <property type="entry name" value="30S ribosomal protein S18"/>
    <property type="match status" value="1"/>
</dbReference>
<dbReference type="Gene3D" id="4.10.640.10">
    <property type="entry name" value="Ribosomal protein S18"/>
    <property type="match status" value="1"/>
</dbReference>
<dbReference type="HAMAP" id="MF_00270">
    <property type="entry name" value="Ribosomal_bS18"/>
    <property type="match status" value="1"/>
</dbReference>
<dbReference type="InterPro" id="IPR001648">
    <property type="entry name" value="Ribosomal_bS18"/>
</dbReference>
<dbReference type="InterPro" id="IPR018275">
    <property type="entry name" value="Ribosomal_bS18_CS"/>
</dbReference>
<dbReference type="InterPro" id="IPR036870">
    <property type="entry name" value="Ribosomal_bS18_sf"/>
</dbReference>
<dbReference type="NCBIfam" id="TIGR00165">
    <property type="entry name" value="S18"/>
    <property type="match status" value="1"/>
</dbReference>
<dbReference type="PANTHER" id="PTHR13479">
    <property type="entry name" value="30S RIBOSOMAL PROTEIN S18"/>
    <property type="match status" value="1"/>
</dbReference>
<dbReference type="PANTHER" id="PTHR13479:SF40">
    <property type="entry name" value="SMALL RIBOSOMAL SUBUNIT PROTEIN BS18M"/>
    <property type="match status" value="1"/>
</dbReference>
<dbReference type="Pfam" id="PF01084">
    <property type="entry name" value="Ribosomal_S18"/>
    <property type="match status" value="1"/>
</dbReference>
<dbReference type="PRINTS" id="PR00974">
    <property type="entry name" value="RIBOSOMALS18"/>
</dbReference>
<dbReference type="SUPFAM" id="SSF46911">
    <property type="entry name" value="Ribosomal protein S18"/>
    <property type="match status" value="1"/>
</dbReference>
<dbReference type="PROSITE" id="PS00057">
    <property type="entry name" value="RIBOSOMAL_S18"/>
    <property type="match status" value="1"/>
</dbReference>
<keyword id="KW-0007">Acetylation</keyword>
<keyword id="KW-1185">Reference proteome</keyword>
<keyword id="KW-0687">Ribonucleoprotein</keyword>
<keyword id="KW-0689">Ribosomal protein</keyword>
<keyword id="KW-0694">RNA-binding</keyword>
<keyword id="KW-0699">rRNA-binding</keyword>
<feature type="initiator methionine" description="Removed" evidence="1">
    <location>
        <position position="1"/>
    </location>
</feature>
<feature type="chain" id="PRO_0000111161" description="Small ribosomal subunit protein bS18">
    <location>
        <begin position="2"/>
        <end position="75"/>
    </location>
</feature>
<feature type="modified residue" description="N-acetylalanine" evidence="1">
    <location>
        <position position="2"/>
    </location>
</feature>